<reference key="1">
    <citation type="journal article" date="2007" name="Biochem. Pharmacol.">
        <title>Identification of novel bradykinin-potentiating peptides (BPPs) in the venom gland of a rattlesnake allowed the evaluation of the structure-function relationship of BPPs.</title>
        <authorList>
            <person name="Gomes C.L."/>
            <person name="Konno K."/>
            <person name="Conceicao I.M."/>
            <person name="Ianzer D."/>
            <person name="Yamanouye N."/>
            <person name="Prezoto B.C."/>
            <person name="Assakura M.T."/>
            <person name="Radis-Baptista G."/>
            <person name="Yamane T."/>
            <person name="Santos R.A."/>
            <person name="de Camargo A.C.M."/>
            <person name="Hayashi M.A.F."/>
        </authorList>
    </citation>
    <scope>NUCLEOTIDE SEQUENCE [MRNA]</scope>
    <scope>FUNCTION</scope>
    <scope>SYNTHESIS OF 28-40; 31-40; 44-49 AND 53-58</scope>
    <source>
        <tissue>Venom gland</tissue>
    </source>
</reference>
<reference key="2">
    <citation type="journal article" date="2005" name="Rapid Commun. Mass Spectrom.">
        <title>Fast analysis of low molecular mass compounds present in snake venom: identification of ten new pyroglutamate-containing peptides.</title>
        <authorList>
            <person name="Wermelinger L.S."/>
            <person name="Dutra D.L."/>
            <person name="Oliveira-Carvalho A.L."/>
            <person name="Soares M.R."/>
            <person name="Bloch C. Jr."/>
            <person name="Zingali R.B."/>
        </authorList>
    </citation>
    <scope>PROTEIN SEQUENCE OF 31-40</scope>
    <scope>SUBCELLULAR LOCATION</scope>
    <scope>TISSUE SPECIFICITY</scope>
    <scope>MASS SPECTROMETRY</scope>
    <scope>PYROGLUTAMATE FORMATION AT GLN-31</scope>
    <source>
        <tissue>Venom</tissue>
    </source>
</reference>
<evidence type="ECO:0000250" key="1"/>
<evidence type="ECO:0000250" key="2">
    <source>
        <dbReference type="UniProtKB" id="P0C7P5"/>
    </source>
</evidence>
<evidence type="ECO:0000250" key="3">
    <source>
        <dbReference type="UniProtKB" id="P0DMD6"/>
    </source>
</evidence>
<evidence type="ECO:0000250" key="4">
    <source>
        <dbReference type="UniProtKB" id="Q27J49"/>
    </source>
</evidence>
<evidence type="ECO:0000255" key="5"/>
<evidence type="ECO:0000256" key="6">
    <source>
        <dbReference type="SAM" id="MobiDB-lite"/>
    </source>
</evidence>
<evidence type="ECO:0000269" key="7">
    <source>
    </source>
</evidence>
<evidence type="ECO:0000269" key="8">
    <source>
    </source>
</evidence>
<evidence type="ECO:0000305" key="9"/>
<accession>Q90Y12</accession>
<accession>Q90Y11</accession>
<keyword id="KW-0165">Cleavage on pair of basic residues</keyword>
<keyword id="KW-0903">Direct protein sequencing</keyword>
<keyword id="KW-1015">Disulfide bond</keyword>
<keyword id="KW-0382">Hypotensive agent</keyword>
<keyword id="KW-0481">Metalloenzyme inhibitor</keyword>
<keyword id="KW-0483">Metalloprotease inhibitor</keyword>
<keyword id="KW-0646">Protease inhibitor</keyword>
<keyword id="KW-0873">Pyrrolidone carboxylic acid</keyword>
<keyword id="KW-0964">Secreted</keyword>
<keyword id="KW-0732">Signal</keyword>
<keyword id="KW-0800">Toxin</keyword>
<keyword id="KW-0838">Vasoactive</keyword>
<keyword id="KW-0840">Vasodilator</keyword>
<dbReference type="EMBL" id="AF308593">
    <property type="protein sequence ID" value="AAL09426.1"/>
    <property type="molecule type" value="mRNA"/>
</dbReference>
<dbReference type="EMBL" id="AF308594">
    <property type="protein sequence ID" value="AAL09427.1"/>
    <property type="molecule type" value="mRNA"/>
</dbReference>
<dbReference type="GO" id="GO:0005576">
    <property type="term" value="C:extracellular region"/>
    <property type="evidence" value="ECO:0007669"/>
    <property type="project" value="UniProtKB-SubCell"/>
</dbReference>
<dbReference type="GO" id="GO:0005179">
    <property type="term" value="F:hormone activity"/>
    <property type="evidence" value="ECO:0007669"/>
    <property type="project" value="InterPro"/>
</dbReference>
<dbReference type="GO" id="GO:0030414">
    <property type="term" value="F:peptidase inhibitor activity"/>
    <property type="evidence" value="ECO:0007669"/>
    <property type="project" value="UniProtKB-KW"/>
</dbReference>
<dbReference type="GO" id="GO:0090729">
    <property type="term" value="F:toxin activity"/>
    <property type="evidence" value="ECO:0007669"/>
    <property type="project" value="UniProtKB-KW"/>
</dbReference>
<dbReference type="GO" id="GO:0006182">
    <property type="term" value="P:cGMP biosynthetic process"/>
    <property type="evidence" value="ECO:0007669"/>
    <property type="project" value="TreeGrafter"/>
</dbReference>
<dbReference type="GO" id="GO:0007168">
    <property type="term" value="P:receptor guanylyl cyclase signaling pathway"/>
    <property type="evidence" value="ECO:0007669"/>
    <property type="project" value="TreeGrafter"/>
</dbReference>
<dbReference type="GO" id="GO:0008217">
    <property type="term" value="P:regulation of blood pressure"/>
    <property type="evidence" value="ECO:0007669"/>
    <property type="project" value="UniProtKB-KW"/>
</dbReference>
<dbReference type="GO" id="GO:0042311">
    <property type="term" value="P:vasodilation"/>
    <property type="evidence" value="ECO:0007669"/>
    <property type="project" value="UniProtKB-KW"/>
</dbReference>
<dbReference type="InterPro" id="IPR000663">
    <property type="entry name" value="Natr_peptide"/>
</dbReference>
<dbReference type="InterPro" id="IPR030480">
    <property type="entry name" value="Natr_peptide_CS"/>
</dbReference>
<dbReference type="PANTHER" id="PTHR12167">
    <property type="entry name" value="C-TYPE NATRIURETIC PEPTIDE"/>
    <property type="match status" value="1"/>
</dbReference>
<dbReference type="PANTHER" id="PTHR12167:SF2">
    <property type="entry name" value="C-TYPE NATRIURETIC PEPTIDE"/>
    <property type="match status" value="1"/>
</dbReference>
<dbReference type="Pfam" id="PF00212">
    <property type="entry name" value="ANP"/>
    <property type="match status" value="1"/>
</dbReference>
<dbReference type="PRINTS" id="PR00710">
    <property type="entry name" value="NATPEPTIDES"/>
</dbReference>
<dbReference type="SMART" id="SM00183">
    <property type="entry name" value="NAT_PEP"/>
    <property type="match status" value="1"/>
</dbReference>
<dbReference type="PROSITE" id="PS00263">
    <property type="entry name" value="NATRIURETIC_PEPTIDE"/>
    <property type="match status" value="1"/>
</dbReference>
<protein>
    <recommendedName>
        <fullName>Bradykinin potentiating and C-type natriuretic peptides</fullName>
    </recommendedName>
    <alternativeName>
        <fullName>BPP-CNP</fullName>
    </alternativeName>
    <component>
        <recommendedName>
            <fullName>Bradykinin-potentiating peptide Cdt1a</fullName>
        </recommendedName>
    </component>
    <component>
        <recommendedName>
            <fullName>Bradykinin-potentiating peptide Cdt1b</fullName>
        </recommendedName>
    </component>
    <component>
        <recommendedName>
            <fullName>Bradykinin-potentiating peptide Cdt2</fullName>
        </recommendedName>
    </component>
    <component>
        <recommendedName>
            <fullName>Bradykinin inhibitor peptide Cdt3</fullName>
        </recommendedName>
    </component>
    <component>
        <recommendedName>
            <fullName>C-type natriuretic peptide</fullName>
            <shortName>CNP</shortName>
        </recommendedName>
    </component>
</protein>
<sequence length="181" mass="18560">MFVSRLAASGLLLLALLAVSLDGKPLQQWSQRWPHLEIPPLVVQNWKSPTQLQARESPAGGTTALREELSLGPEAALDTPPAGPDGGPRGSKAAAAAPQRLSKSKGASATSAASRDLRTDGKQARQNWGRLVSPDHHSAAGGGCGGGGGARRLKGLAKKRAGNGCFGLKLDRIGSMSGLGC</sequence>
<comment type="function">
    <text evidence="8">Bradykinin-potentiating peptide both inhibits the activity of the angiotensin-converting enzyme (ACE) and enhances the action of bradykinin by inhibiting the peptidases that inactivate it. It acts as an indirect hypotensive agent. Synthetic Cdt1a, Cdt1b and the short hexapeptide Cdt3 are able to potentiate the hypotensive effect mediated by Bk on the blood pressure of anesthetized rats.</text>
</comment>
<comment type="function">
    <molecule>C-type natriuretic peptide</molecule>
    <text evidence="2">has a vasorelaxant activity in rat aortic strips and a diuretic potency in anesthetized rats (By similarity). May act by activating natriuretic receptors (NPR1 and/or NPR2).</text>
</comment>
<comment type="subcellular location">
    <subcellularLocation>
        <location evidence="7">Secreted</location>
    </subcellularLocation>
</comment>
<comment type="tissue specificity">
    <text evidence="7">Venom gland.</text>
</comment>
<comment type="mass spectrometry" mass="1255.36" method="MALDI" evidence="7">
    <molecule>Bradykinin-potentiating peptide Cdt1b</molecule>
</comment>
<comment type="similarity">
    <text evidence="9">In the N-terminal section; belongs to the bradykinin-potentiating peptide family.</text>
</comment>
<comment type="similarity">
    <text evidence="9">In the C-terminal section; belongs to the natriuretic peptide family.</text>
</comment>
<organism>
    <name type="scientific">Crotalus durissus terrificus</name>
    <name type="common">South American rattlesnake</name>
    <dbReference type="NCBI Taxonomy" id="8732"/>
    <lineage>
        <taxon>Eukaryota</taxon>
        <taxon>Metazoa</taxon>
        <taxon>Chordata</taxon>
        <taxon>Craniata</taxon>
        <taxon>Vertebrata</taxon>
        <taxon>Euteleostomi</taxon>
        <taxon>Lepidosauria</taxon>
        <taxon>Squamata</taxon>
        <taxon>Bifurcata</taxon>
        <taxon>Unidentata</taxon>
        <taxon>Episquamata</taxon>
        <taxon>Toxicofera</taxon>
        <taxon>Serpentes</taxon>
        <taxon>Colubroidea</taxon>
        <taxon>Viperidae</taxon>
        <taxon>Crotalinae</taxon>
        <taxon>Crotalus</taxon>
    </lineage>
</organism>
<name>BNP_CRODU</name>
<proteinExistence type="evidence at protein level"/>
<feature type="signal peptide" evidence="5">
    <location>
        <begin position="1"/>
        <end position="23"/>
    </location>
</feature>
<feature type="propeptide" id="PRO_0000335906" evidence="5">
    <location>
        <begin position="24"/>
        <end position="27"/>
    </location>
</feature>
<feature type="peptide" id="PRO_0000335907" description="Bradykinin-potentiating peptide Cdt1a" evidence="1">
    <location>
        <begin position="28"/>
        <end position="40"/>
    </location>
</feature>
<feature type="peptide" id="PRO_0000335908" description="Bradykinin-potentiating peptide Cdt1b">
    <location>
        <begin position="31"/>
        <end position="40"/>
    </location>
</feature>
<feature type="propeptide" id="PRO_0000335909">
    <location>
        <begin position="41"/>
        <end position="43"/>
    </location>
</feature>
<feature type="peptide" id="PRO_0000335910" description="Bradykinin-potentiating peptide Cdt2" evidence="1">
    <location>
        <begin position="44"/>
        <end position="49"/>
    </location>
</feature>
<feature type="propeptide" id="PRO_0000335911" evidence="5">
    <location>
        <begin position="50"/>
        <end position="52"/>
    </location>
</feature>
<feature type="peptide" id="PRO_0000335912" description="Bradykinin inhibitor peptide Cdt3" evidence="1">
    <location>
        <begin position="53"/>
        <end position="58"/>
    </location>
</feature>
<feature type="propeptide" id="PRO_0000335913" evidence="5">
    <location>
        <begin position="59"/>
        <end position="159"/>
    </location>
</feature>
<feature type="peptide" id="PRO_0000335914" description="C-type natriuretic peptide" evidence="4">
    <location>
        <begin position="160"/>
        <end position="181"/>
    </location>
</feature>
<feature type="region of interest" description="Disordered" evidence="6">
    <location>
        <begin position="74"/>
        <end position="150"/>
    </location>
</feature>
<feature type="compositionally biased region" description="Low complexity" evidence="6">
    <location>
        <begin position="104"/>
        <end position="114"/>
    </location>
</feature>
<feature type="compositionally biased region" description="Gly residues" evidence="6">
    <location>
        <begin position="140"/>
        <end position="150"/>
    </location>
</feature>
<feature type="modified residue" description="Pyrrolidone carboxylic acid" evidence="1">
    <location>
        <position position="28"/>
    </location>
</feature>
<feature type="modified residue" description="Pyrrolidone carboxylic acid" evidence="7">
    <location>
        <position position="31"/>
    </location>
</feature>
<feature type="modified residue" description="Pyrrolidone carboxylic acid" evidence="1">
    <location>
        <position position="44"/>
    </location>
</feature>
<feature type="modified residue" description="Pyrrolidone carboxylic acid" evidence="1">
    <location>
        <position position="53"/>
    </location>
</feature>
<feature type="disulfide bond" evidence="3">
    <location>
        <begin position="165"/>
        <end position="181"/>
    </location>
</feature>
<feature type="sequence variant" description="In isoform 1.">
    <original>Q</original>
    <variation>H</variation>
    <location>
        <position position="31"/>
    </location>
</feature>
<feature type="sequence variant" description="In isoform 1.">
    <original>L</original>
    <variation>P</variation>
    <location>
        <position position="36"/>
    </location>
</feature>
<feature type="sequence variant" description="In isoform 1.">
    <original>C</original>
    <variation>G</variation>
    <location>
        <position position="144"/>
    </location>
</feature>